<gene>
    <name type="primary">PMCH</name>
    <name type="synonym">MCH</name>
</gene>
<organism>
    <name type="scientific">Homo sapiens</name>
    <name type="common">Human</name>
    <dbReference type="NCBI Taxonomy" id="9606"/>
    <lineage>
        <taxon>Eukaryota</taxon>
        <taxon>Metazoa</taxon>
        <taxon>Chordata</taxon>
        <taxon>Craniata</taxon>
        <taxon>Vertebrata</taxon>
        <taxon>Euteleostomi</taxon>
        <taxon>Mammalia</taxon>
        <taxon>Eutheria</taxon>
        <taxon>Euarchontoglires</taxon>
        <taxon>Primates</taxon>
        <taxon>Haplorrhini</taxon>
        <taxon>Catarrhini</taxon>
        <taxon>Hominidae</taxon>
        <taxon>Homo</taxon>
    </lineage>
</organism>
<evidence type="ECO:0000250" key="1"/>
<evidence type="ECO:0000255" key="2"/>
<evidence type="ECO:0000269" key="3">
    <source>
    </source>
</evidence>
<evidence type="ECO:0000269" key="4">
    <source>
    </source>
</evidence>
<evidence type="ECO:0000305" key="5"/>
<evidence type="ECO:0007829" key="6">
    <source>
        <dbReference type="PDB" id="8WST"/>
    </source>
</evidence>
<name>MCH_HUMAN</name>
<dbReference type="EMBL" id="M57703">
    <property type="protein sequence ID" value="AAA63214.1"/>
    <property type="molecule type" value="mRNA"/>
</dbReference>
<dbReference type="EMBL" id="S63697">
    <property type="protein sequence ID" value="AAB27493.1"/>
    <property type="molecule type" value="Genomic_DNA"/>
</dbReference>
<dbReference type="EMBL" id="CH471054">
    <property type="protein sequence ID" value="EAW97693.1"/>
    <property type="molecule type" value="Genomic_DNA"/>
</dbReference>
<dbReference type="EMBL" id="BC018048">
    <property type="protein sequence ID" value="AAH18048.1"/>
    <property type="molecule type" value="mRNA"/>
</dbReference>
<dbReference type="CCDS" id="CCDS31885.1"/>
<dbReference type="PIR" id="I52634">
    <property type="entry name" value="I52634"/>
</dbReference>
<dbReference type="RefSeq" id="NP_002665.2">
    <property type="nucleotide sequence ID" value="NM_002674.4"/>
</dbReference>
<dbReference type="PDB" id="8WSS">
    <property type="method" value="EM"/>
    <property type="resolution" value="3.01 A"/>
    <property type="chains" value="L=147-165"/>
</dbReference>
<dbReference type="PDB" id="8WST">
    <property type="method" value="EM"/>
    <property type="resolution" value="2.40 A"/>
    <property type="chains" value="L=147-165"/>
</dbReference>
<dbReference type="PDB" id="8WWK">
    <property type="method" value="EM"/>
    <property type="resolution" value="2.61 A"/>
    <property type="chains" value="L=147-165"/>
</dbReference>
<dbReference type="PDB" id="8WWL">
    <property type="method" value="EM"/>
    <property type="resolution" value="2.78 A"/>
    <property type="chains" value="L=147-165"/>
</dbReference>
<dbReference type="PDB" id="8WWM">
    <property type="method" value="EM"/>
    <property type="resolution" value="2.81 A"/>
    <property type="chains" value="L=147-165"/>
</dbReference>
<dbReference type="PDB" id="8WWN">
    <property type="method" value="EM"/>
    <property type="resolution" value="2.65 A"/>
    <property type="chains" value="L=147-165"/>
</dbReference>
<dbReference type="PDBsum" id="8WSS"/>
<dbReference type="PDBsum" id="8WST"/>
<dbReference type="PDBsum" id="8WWK"/>
<dbReference type="PDBsum" id="8WWL"/>
<dbReference type="PDBsum" id="8WWM"/>
<dbReference type="PDBsum" id="8WWN"/>
<dbReference type="EMDB" id="EMD-37823"/>
<dbReference type="EMDB" id="EMD-37824"/>
<dbReference type="EMDB" id="EMD-37891"/>
<dbReference type="EMDB" id="EMD-37892"/>
<dbReference type="EMDB" id="EMD-37893"/>
<dbReference type="EMDB" id="EMD-37894"/>
<dbReference type="SMR" id="P20382"/>
<dbReference type="BioGRID" id="111380">
    <property type="interactions" value="18"/>
</dbReference>
<dbReference type="FunCoup" id="P20382">
    <property type="interactions" value="490"/>
</dbReference>
<dbReference type="IntAct" id="P20382">
    <property type="interactions" value="14"/>
</dbReference>
<dbReference type="STRING" id="9606.ENSP00000332225"/>
<dbReference type="BioMuta" id="PMCH"/>
<dbReference type="DMDM" id="229462960"/>
<dbReference type="MassIVE" id="P20382"/>
<dbReference type="PaxDb" id="9606-ENSP00000332225"/>
<dbReference type="PeptideAtlas" id="P20382"/>
<dbReference type="ProteomicsDB" id="53758"/>
<dbReference type="Antibodypedia" id="18038">
    <property type="antibodies" value="151 antibodies from 25 providers"/>
</dbReference>
<dbReference type="DNASU" id="5367"/>
<dbReference type="Ensembl" id="ENST00000329406.5">
    <property type="protein sequence ID" value="ENSP00000332225.4"/>
    <property type="gene ID" value="ENSG00000183395.5"/>
</dbReference>
<dbReference type="GeneID" id="5367"/>
<dbReference type="KEGG" id="hsa:5367"/>
<dbReference type="MANE-Select" id="ENST00000329406.5">
    <property type="protein sequence ID" value="ENSP00000332225.4"/>
    <property type="RefSeq nucleotide sequence ID" value="NM_002674.4"/>
    <property type="RefSeq protein sequence ID" value="NP_002665.2"/>
</dbReference>
<dbReference type="UCSC" id="uc001tjl.4">
    <property type="organism name" value="human"/>
</dbReference>
<dbReference type="AGR" id="HGNC:9109"/>
<dbReference type="CTD" id="5367"/>
<dbReference type="DisGeNET" id="5367"/>
<dbReference type="GeneCards" id="PMCH"/>
<dbReference type="HGNC" id="HGNC:9109">
    <property type="gene designation" value="PMCH"/>
</dbReference>
<dbReference type="HPA" id="ENSG00000183395">
    <property type="expression patterns" value="Tissue enriched (brain)"/>
</dbReference>
<dbReference type="MIM" id="176795">
    <property type="type" value="gene"/>
</dbReference>
<dbReference type="neXtProt" id="NX_P20382"/>
<dbReference type="OpenTargets" id="ENSG00000183395"/>
<dbReference type="PharmGKB" id="PA33435"/>
<dbReference type="VEuPathDB" id="HostDB:ENSG00000183395"/>
<dbReference type="eggNOG" id="ENOG502RZ12">
    <property type="taxonomic scope" value="Eukaryota"/>
</dbReference>
<dbReference type="GeneTree" id="ENSGT00390000004984"/>
<dbReference type="HOGENOM" id="CLU_1610172_0_0_1"/>
<dbReference type="InParanoid" id="P20382"/>
<dbReference type="OMA" id="NTFRMGK"/>
<dbReference type="OrthoDB" id="8639774at2759"/>
<dbReference type="PAN-GO" id="P20382">
    <property type="GO annotations" value="2 GO annotations based on evolutionary models"/>
</dbReference>
<dbReference type="PhylomeDB" id="P20382"/>
<dbReference type="TreeFam" id="TF330944"/>
<dbReference type="PathwayCommons" id="P20382"/>
<dbReference type="Reactome" id="R-HSA-375276">
    <property type="pathway name" value="Peptide ligand-binding receptors"/>
</dbReference>
<dbReference type="Reactome" id="R-HSA-416476">
    <property type="pathway name" value="G alpha (q) signalling events"/>
</dbReference>
<dbReference type="Reactome" id="R-HSA-418594">
    <property type="pathway name" value="G alpha (i) signalling events"/>
</dbReference>
<dbReference type="SignaLink" id="P20382"/>
<dbReference type="SIGNOR" id="P20382"/>
<dbReference type="BioGRID-ORCS" id="5367">
    <property type="hits" value="13 hits in 1111 CRISPR screens"/>
</dbReference>
<dbReference type="GenomeRNAi" id="5367"/>
<dbReference type="Pharos" id="P20382">
    <property type="development level" value="Tbio"/>
</dbReference>
<dbReference type="PRO" id="PR:P20382"/>
<dbReference type="Proteomes" id="UP000005640">
    <property type="component" value="Chromosome 12"/>
</dbReference>
<dbReference type="RNAct" id="P20382">
    <property type="molecule type" value="protein"/>
</dbReference>
<dbReference type="Bgee" id="ENSG00000183395">
    <property type="expression patterns" value="Expressed in hypothalamus and 118 other cell types or tissues"/>
</dbReference>
<dbReference type="GO" id="GO:0005576">
    <property type="term" value="C:extracellular region"/>
    <property type="evidence" value="ECO:0000304"/>
    <property type="project" value="Reactome"/>
</dbReference>
<dbReference type="GO" id="GO:0005634">
    <property type="term" value="C:nucleus"/>
    <property type="evidence" value="ECO:0007669"/>
    <property type="project" value="Ensembl"/>
</dbReference>
<dbReference type="GO" id="GO:0045202">
    <property type="term" value="C:synapse"/>
    <property type="evidence" value="ECO:0007669"/>
    <property type="project" value="GOC"/>
</dbReference>
<dbReference type="GO" id="GO:0030354">
    <property type="term" value="F:melanin-concentrating hormone activity"/>
    <property type="evidence" value="ECO:0007669"/>
    <property type="project" value="InterPro"/>
</dbReference>
<dbReference type="GO" id="GO:0031777">
    <property type="term" value="F:type 1 melanin-concentrating hormone receptor binding"/>
    <property type="evidence" value="ECO:0000318"/>
    <property type="project" value="GO_Central"/>
</dbReference>
<dbReference type="GO" id="GO:0030154">
    <property type="term" value="P:cell differentiation"/>
    <property type="evidence" value="ECO:0007669"/>
    <property type="project" value="UniProtKB-KW"/>
</dbReference>
<dbReference type="GO" id="GO:0007268">
    <property type="term" value="P:chemical synaptic transmission"/>
    <property type="evidence" value="ECO:0007669"/>
    <property type="project" value="InterPro"/>
</dbReference>
<dbReference type="GO" id="GO:0007631">
    <property type="term" value="P:feeding behavior"/>
    <property type="evidence" value="ECO:0000250"/>
    <property type="project" value="UniProtKB"/>
</dbReference>
<dbReference type="GO" id="GO:0032227">
    <property type="term" value="P:negative regulation of synaptic transmission, dopaminergic"/>
    <property type="evidence" value="ECO:0000318"/>
    <property type="project" value="GO_Central"/>
</dbReference>
<dbReference type="GO" id="GO:0007218">
    <property type="term" value="P:neuropeptide signaling pathway"/>
    <property type="evidence" value="ECO:0007669"/>
    <property type="project" value="UniProtKB-KW"/>
</dbReference>
<dbReference type="GO" id="GO:0007283">
    <property type="term" value="P:spermatogenesis"/>
    <property type="evidence" value="ECO:0007669"/>
    <property type="project" value="UniProtKB-KW"/>
</dbReference>
<dbReference type="InterPro" id="IPR005456">
    <property type="entry name" value="Prepro-melanin_conc_hormone"/>
</dbReference>
<dbReference type="PANTHER" id="PTHR12091">
    <property type="entry name" value="MELANIN-CONCENTRATING HORMONE"/>
    <property type="match status" value="1"/>
</dbReference>
<dbReference type="PANTHER" id="PTHR12091:SF0">
    <property type="entry name" value="PRO-MCH"/>
    <property type="match status" value="1"/>
</dbReference>
<dbReference type="Pfam" id="PF05824">
    <property type="entry name" value="Pro-MCH"/>
    <property type="match status" value="1"/>
</dbReference>
<dbReference type="PRINTS" id="PR01641">
    <property type="entry name" value="PROMCHFAMILY"/>
</dbReference>
<feature type="signal peptide" evidence="2">
    <location>
        <begin position="1"/>
        <end position="21"/>
    </location>
</feature>
<feature type="chain" id="PRO_0000019104" description="Pro-MCH">
    <location>
        <begin position="22"/>
        <end position="165"/>
    </location>
</feature>
<feature type="peptide" id="PRO_0000019105" description="Neuropeptide-glycine-glutamic acid" evidence="2">
    <location>
        <begin position="110"/>
        <end position="128"/>
    </location>
</feature>
<feature type="peptide" id="PRO_0000019106" description="Neuropeptide-glutamic acid-isoleucine">
    <location>
        <begin position="131"/>
        <end position="143"/>
    </location>
</feature>
<feature type="peptide" id="PRO_0000019107" description="Melanin-concentrating hormone">
    <location>
        <begin position="147"/>
        <end position="165"/>
    </location>
</feature>
<feature type="modified residue" description="Isoleucine amide" evidence="1">
    <location>
        <position position="143"/>
    </location>
</feature>
<feature type="disulfide bond" evidence="1">
    <location>
        <begin position="153"/>
        <end position="162"/>
    </location>
</feature>
<feature type="sequence conflict" description="In Ref. 2; AAB27493." evidence="5" ref="2">
    <original>F</original>
    <variation>S</variation>
    <location>
        <position position="42"/>
    </location>
</feature>
<feature type="sequence conflict" description="In Ref. 1; AAA63214." evidence="5" ref="1">
    <original>PYL</original>
    <variation>GYQ</variation>
    <location>
        <begin position="104"/>
        <end position="106"/>
    </location>
</feature>
<feature type="sequence conflict" description="In Ref. 1; AAA63214." evidence="5" ref="1">
    <original>A</original>
    <variation>D</variation>
    <location>
        <position position="113"/>
    </location>
</feature>
<feature type="strand" evidence="6">
    <location>
        <begin position="153"/>
        <end position="155"/>
    </location>
</feature>
<feature type="strand" evidence="6">
    <location>
        <begin position="158"/>
        <end position="160"/>
    </location>
</feature>
<reference key="1">
    <citation type="journal article" date="1990" name="Mol. Endocrinol.">
        <title>Structure of the human melanin concentrating hormone mRNA.</title>
        <authorList>
            <person name="Presse F."/>
            <person name="Nahon J.-L."/>
            <person name="Fischer W.H."/>
            <person name="Vale W."/>
        </authorList>
    </citation>
    <scope>NUCLEOTIDE SEQUENCE [MRNA]</scope>
    <source>
        <tissue>Hypothalamus</tissue>
    </source>
</reference>
<reference key="2">
    <citation type="journal article" date="1993" name="Brain Res. Mol. Brain Res.">
        <title>Isolation and characterization of the human melanin-concentrating hormone gene and a variant gene.</title>
        <authorList>
            <person name="Breton C."/>
            <person name="Schorpp M."/>
            <person name="Nahon J.-L."/>
        </authorList>
    </citation>
    <scope>NUCLEOTIDE SEQUENCE [GENOMIC DNA]</scope>
    <source>
        <tissue>Mammary cancer</tissue>
    </source>
</reference>
<reference key="3">
    <citation type="submission" date="2005-07" db="EMBL/GenBank/DDBJ databases">
        <authorList>
            <person name="Mural R.J."/>
            <person name="Istrail S."/>
            <person name="Sutton G.G."/>
            <person name="Florea L."/>
            <person name="Halpern A.L."/>
            <person name="Mobarry C.M."/>
            <person name="Lippert R."/>
            <person name="Walenz B."/>
            <person name="Shatkay H."/>
            <person name="Dew I."/>
            <person name="Miller J.R."/>
            <person name="Flanigan M.J."/>
            <person name="Edwards N.J."/>
            <person name="Bolanos R."/>
            <person name="Fasulo D."/>
            <person name="Halldorsson B.V."/>
            <person name="Hannenhalli S."/>
            <person name="Turner R."/>
            <person name="Yooseph S."/>
            <person name="Lu F."/>
            <person name="Nusskern D.R."/>
            <person name="Shue B.C."/>
            <person name="Zheng X.H."/>
            <person name="Zhong F."/>
            <person name="Delcher A.L."/>
            <person name="Huson D.H."/>
            <person name="Kravitz S.A."/>
            <person name="Mouchard L."/>
            <person name="Reinert K."/>
            <person name="Remington K.A."/>
            <person name="Clark A.G."/>
            <person name="Waterman M.S."/>
            <person name="Eichler E.E."/>
            <person name="Adams M.D."/>
            <person name="Hunkapiller M.W."/>
            <person name="Myers E.W."/>
            <person name="Venter J.C."/>
        </authorList>
    </citation>
    <scope>NUCLEOTIDE SEQUENCE [LARGE SCALE GENOMIC DNA]</scope>
</reference>
<reference key="4">
    <citation type="journal article" date="2004" name="Genome Res.">
        <title>The status, quality, and expansion of the NIH full-length cDNA project: the Mammalian Gene Collection (MGC).</title>
        <authorList>
            <consortium name="The MGC Project Team"/>
        </authorList>
    </citation>
    <scope>NUCLEOTIDE SEQUENCE [LARGE SCALE MRNA]</scope>
    <source>
        <tissue>Brain</tissue>
    </source>
</reference>
<reference key="5">
    <citation type="journal article" date="1999" name="J. Biol. Chem.">
        <title>Cellular localization and role of prohormone convertases in the processing of pro-melanin concentrating hormone in mammals.</title>
        <authorList>
            <person name="Viale A."/>
            <person name="Ortola C."/>
            <person name="Hervieu G."/>
            <person name="Furuta M."/>
            <person name="Barbero P."/>
            <person name="Steiner D.F."/>
            <person name="Seidah N.G."/>
            <person name="Nahon J.-L."/>
        </authorList>
    </citation>
    <scope>PROTEOLYTIC PROCESSING</scope>
</reference>
<reference key="6">
    <citation type="journal article" date="1997" name="Brain Res. Mol. Brain Res.">
        <title>The melanin-concentrating hormone gene in human: flanking region analysis, fine chromosome mapping, and tissue-specific expression.</title>
        <authorList>
            <person name="Viale A."/>
            <person name="Zhixing Y."/>
            <person name="Breton C."/>
            <person name="Pedeutour F."/>
            <person name="Coquerel A."/>
            <person name="Jordan D."/>
            <person name="Nahon J.-L."/>
        </authorList>
    </citation>
    <scope>TISSUE SPECIFICITY</scope>
</reference>
<sequence length="165" mass="18679">MAKMNLSSYILILTFSLFSQGILLSASKSIRNLDDDMVFNTFRLGKGFQKEDTAEKSVIAPSLEQYKNDESSFMNEEENKVSKNTGSKHNFLNHGLPLNLAIKPYLALKGSVAFPAENGVQNTESTQEKREIGDEENSAKFPIGRRDFDMLRCMLGRVYRPCWQV</sequence>
<proteinExistence type="evidence at protein level"/>
<accession>P20382</accession>
<accession>Q16044</accession>
<accession>Q8WVG0</accession>
<protein>
    <recommendedName>
        <fullName>Pro-MCH</fullName>
    </recommendedName>
    <component>
        <recommendedName>
            <fullName>Neuropeptide-glycine-glutamic acid</fullName>
            <shortName>NGE</shortName>
            <shortName>Neuropeptide G-E</shortName>
        </recommendedName>
    </component>
    <component>
        <recommendedName>
            <fullName>Neuropeptide-glutamic acid-isoleucine</fullName>
            <shortName>NEI</shortName>
            <shortName>Neuropeptide E-I</shortName>
        </recommendedName>
    </component>
    <component>
        <recommendedName>
            <fullName>Melanin-concentrating hormone</fullName>
            <shortName>MCH</shortName>
        </recommendedName>
    </component>
</protein>
<comment type="function">
    <text>MCH may act as a neurotransmitter or neuromodulator in a broad array of neuronal functions directed toward the regulation of goal-directed behavior, such as food intake, and general arousal. May also have a role in spermatocyte differentiation.</text>
</comment>
<comment type="subcellular location">
    <subcellularLocation>
        <location>Secreted</location>
    </subcellularLocation>
</comment>
<comment type="tissue specificity">
    <text evidence="4">Predominantly expressed in lateral hypothalamus, also detected in pallidum, neocortex and cerebellum. Also found in thymus, brown adipose tissue, duodenum and testis (spermatogonia, early spermatocytes and Sertoli cells). No expression in peripheral blood. In brain exclusively mature MCH and NEI peptides are present. In peripheral tissues a large product, encompassing the NEI and MCH domains of the precursor, is found predominantly.</text>
</comment>
<comment type="PTM">
    <text evidence="3">Differentially processed in the brain and in peripheral organs producing two neuropeptides; NEI and MCH. A third peptide, NGE, may also be produced. Preferential processing in neurons by prohormone convertase 2 (PC2) generates NEI. MCH is generated in neurons of the lateral hypothalmic area by several prohormone convertases including PC1/3, PC2 and PC5/6.</text>
</comment>
<comment type="similarity">
    <text evidence="5">Belongs to the melanin-concentrating hormone family.</text>
</comment>
<keyword id="KW-0002">3D-structure</keyword>
<keyword id="KW-0027">Amidation</keyword>
<keyword id="KW-0165">Cleavage on pair of basic residues</keyword>
<keyword id="KW-0217">Developmental protein</keyword>
<keyword id="KW-0221">Differentiation</keyword>
<keyword id="KW-1015">Disulfide bond</keyword>
<keyword id="KW-0372">Hormone</keyword>
<keyword id="KW-0527">Neuropeptide</keyword>
<keyword id="KW-1267">Proteomics identification</keyword>
<keyword id="KW-1185">Reference proteome</keyword>
<keyword id="KW-0964">Secreted</keyword>
<keyword id="KW-0732">Signal</keyword>
<keyword id="KW-0744">Spermatogenesis</keyword>